<name>FLGI_ALISL</name>
<gene>
    <name evidence="1" type="primary">flgI</name>
    <name type="ordered locus">VSAL_I2331</name>
</gene>
<organism>
    <name type="scientific">Aliivibrio salmonicida (strain LFI1238)</name>
    <name type="common">Vibrio salmonicida (strain LFI1238)</name>
    <dbReference type="NCBI Taxonomy" id="316275"/>
    <lineage>
        <taxon>Bacteria</taxon>
        <taxon>Pseudomonadati</taxon>
        <taxon>Pseudomonadota</taxon>
        <taxon>Gammaproteobacteria</taxon>
        <taxon>Vibrionales</taxon>
        <taxon>Vibrionaceae</taxon>
        <taxon>Aliivibrio</taxon>
    </lineage>
</organism>
<keyword id="KW-0975">Bacterial flagellum</keyword>
<keyword id="KW-0574">Periplasm</keyword>
<keyword id="KW-0732">Signal</keyword>
<comment type="function">
    <text evidence="1">Assembles around the rod to form the L-ring and probably protects the motor/basal body from shearing forces during rotation.</text>
</comment>
<comment type="subunit">
    <text evidence="1">The basal body constitutes a major portion of the flagellar organelle and consists of four rings (L,P,S, and M) mounted on a central rod.</text>
</comment>
<comment type="subcellular location">
    <subcellularLocation>
        <location evidence="1">Periplasm</location>
    </subcellularLocation>
    <subcellularLocation>
        <location evidence="1">Bacterial flagellum basal body</location>
    </subcellularLocation>
</comment>
<comment type="similarity">
    <text evidence="1">Belongs to the FlgI family.</text>
</comment>
<feature type="signal peptide" evidence="1">
    <location>
        <begin position="1"/>
        <end position="30"/>
    </location>
</feature>
<feature type="chain" id="PRO_5000405846" description="Flagellar P-ring protein">
    <location>
        <begin position="31"/>
        <end position="373"/>
    </location>
</feature>
<accession>B6EJG1</accession>
<reference key="1">
    <citation type="journal article" date="2008" name="BMC Genomics">
        <title>The genome sequence of the fish pathogen Aliivibrio salmonicida strain LFI1238 shows extensive evidence of gene decay.</title>
        <authorList>
            <person name="Hjerde E."/>
            <person name="Lorentzen M.S."/>
            <person name="Holden M.T."/>
            <person name="Seeger K."/>
            <person name="Paulsen S."/>
            <person name="Bason N."/>
            <person name="Churcher C."/>
            <person name="Harris D."/>
            <person name="Norbertczak H."/>
            <person name="Quail M.A."/>
            <person name="Sanders S."/>
            <person name="Thurston S."/>
            <person name="Parkhill J."/>
            <person name="Willassen N.P."/>
            <person name="Thomson N.R."/>
        </authorList>
    </citation>
    <scope>NUCLEOTIDE SEQUENCE [LARGE SCALE GENOMIC DNA]</scope>
    <source>
        <strain>LFI1238</strain>
    </source>
</reference>
<proteinExistence type="inferred from homology"/>
<sequence length="373" mass="39195">MTNRWSFDVKKNLVTLILTWLCLSISTAQAARIKDVSEVAGVRSNQLIGYGLVSGLPGTGESTPFTDQSFNAMLQNFGIQLPPGTKPKTKNVAAVMVTTTLPAFAKQGQVVDITVSSVGSAKSLRGGTLLQTFLKGLDGKTYAIAQGNLIVSGFSATGADGSKIVGNNPTVGRISGGAMVEREVPSPFGRGDFITFNLLDSDFTTAQRMADAVNNFLGPNMASAVDATSVRVRAPRDISQRVAFLSAVENVNFDPADGSAKIIVNSRTGTIVVGKHVRLRAAAVTHGGMTVAIKENQQVSQPGPFGNGKTVVTQDSDIEVTEKQGKMFKFEPGLTLDDLVRAVNEVGAAPSDLMAILQALKQAGAIEGQLIII</sequence>
<protein>
    <recommendedName>
        <fullName evidence="1">Flagellar P-ring protein</fullName>
    </recommendedName>
    <alternativeName>
        <fullName evidence="1">Basal body P-ring protein</fullName>
    </alternativeName>
</protein>
<evidence type="ECO:0000255" key="1">
    <source>
        <dbReference type="HAMAP-Rule" id="MF_00416"/>
    </source>
</evidence>
<dbReference type="EMBL" id="FM178379">
    <property type="protein sequence ID" value="CAQ80015.1"/>
    <property type="molecule type" value="Genomic_DNA"/>
</dbReference>
<dbReference type="RefSeq" id="WP_012550827.1">
    <property type="nucleotide sequence ID" value="NC_011312.1"/>
</dbReference>
<dbReference type="SMR" id="B6EJG1"/>
<dbReference type="KEGG" id="vsa:VSAL_I2331"/>
<dbReference type="eggNOG" id="COG1706">
    <property type="taxonomic scope" value="Bacteria"/>
</dbReference>
<dbReference type="HOGENOM" id="CLU_045235_1_0_6"/>
<dbReference type="Proteomes" id="UP000001730">
    <property type="component" value="Chromosome 1"/>
</dbReference>
<dbReference type="GO" id="GO:0009428">
    <property type="term" value="C:bacterial-type flagellum basal body, distal rod, P ring"/>
    <property type="evidence" value="ECO:0007669"/>
    <property type="project" value="InterPro"/>
</dbReference>
<dbReference type="GO" id="GO:0030288">
    <property type="term" value="C:outer membrane-bounded periplasmic space"/>
    <property type="evidence" value="ECO:0007669"/>
    <property type="project" value="InterPro"/>
</dbReference>
<dbReference type="GO" id="GO:0005198">
    <property type="term" value="F:structural molecule activity"/>
    <property type="evidence" value="ECO:0007669"/>
    <property type="project" value="InterPro"/>
</dbReference>
<dbReference type="GO" id="GO:0071973">
    <property type="term" value="P:bacterial-type flagellum-dependent cell motility"/>
    <property type="evidence" value="ECO:0007669"/>
    <property type="project" value="InterPro"/>
</dbReference>
<dbReference type="HAMAP" id="MF_00416">
    <property type="entry name" value="FlgI"/>
    <property type="match status" value="1"/>
</dbReference>
<dbReference type="InterPro" id="IPR001782">
    <property type="entry name" value="Flag_FlgI"/>
</dbReference>
<dbReference type="NCBIfam" id="NF003676">
    <property type="entry name" value="PRK05303.1"/>
    <property type="match status" value="1"/>
</dbReference>
<dbReference type="PANTHER" id="PTHR30381">
    <property type="entry name" value="FLAGELLAR P-RING PERIPLASMIC PROTEIN FLGI"/>
    <property type="match status" value="1"/>
</dbReference>
<dbReference type="PANTHER" id="PTHR30381:SF0">
    <property type="entry name" value="FLAGELLAR P-RING PROTEIN"/>
    <property type="match status" value="1"/>
</dbReference>
<dbReference type="Pfam" id="PF02119">
    <property type="entry name" value="FlgI"/>
    <property type="match status" value="1"/>
</dbReference>
<dbReference type="PRINTS" id="PR01010">
    <property type="entry name" value="FLGPRINGFLGI"/>
</dbReference>